<name>MURD_THEAB</name>
<sequence length="423" mass="48274">MKYTLLGFGISNKEILKYLLKKGERVFVSEGKKLSEVDKEFLNSFGVDFEENGHTEKVLDSDVILVSPGIHFENDIIKKAKENNIKIDTEISFCLKEFEKINWFPYVIAVTGSVGKSTTVSMIQHVLNKYKRTLLAGNIGIPIAKLLNDDLRADYLVLEVSSFQLFWSDKFKPNISSILNIYPNHLNWHPEMSHYINSKFKITLSQDENDFFVYNPNDEYIVKNLGKVKAKKVPFKYDFEIHQLPEHLRYKQTIENVAAAKTIVEVAGFEFNIDFLEDFEKLPHRMEYVTEINGVKFFNDSKATNAAAVIRAVENFDGKLHLIMAGIGKNEDYTLLRKVLKNSVKTVALVGPIAKDVKPYLDGINFMECSSINEAVNQLFRIANPGDVIMLSPGGASFDAFKNFEERGEYFKQLVFQLKEGKS</sequence>
<reference key="1">
    <citation type="journal article" date="2009" name="J. Bacteriol.">
        <title>The genome of Thermosipho africanus TCF52B: lateral genetic connections to the Firmicutes and Archaea.</title>
        <authorList>
            <person name="Nesboe C.L."/>
            <person name="Bapteste E."/>
            <person name="Curtis B."/>
            <person name="Dahle H."/>
            <person name="Lopez P."/>
            <person name="Macleod D."/>
            <person name="Dlutek M."/>
            <person name="Bowman S."/>
            <person name="Zhaxybayeva O."/>
            <person name="Birkeland N.-K."/>
            <person name="Doolittle W.F."/>
        </authorList>
    </citation>
    <scope>NUCLEOTIDE SEQUENCE [LARGE SCALE GENOMIC DNA]</scope>
    <source>
        <strain>TCF52B</strain>
    </source>
</reference>
<gene>
    <name evidence="1" type="primary">murD</name>
    <name type="ordered locus">THA_468</name>
</gene>
<dbReference type="EC" id="6.3.2.9" evidence="1"/>
<dbReference type="EMBL" id="CP001185">
    <property type="protein sequence ID" value="ACJ74959.1"/>
    <property type="molecule type" value="Genomic_DNA"/>
</dbReference>
<dbReference type="RefSeq" id="WP_004104249.1">
    <property type="nucleotide sequence ID" value="NC_011653.1"/>
</dbReference>
<dbReference type="SMR" id="B7IFU5"/>
<dbReference type="STRING" id="484019.THA_468"/>
<dbReference type="KEGG" id="taf:THA_468"/>
<dbReference type="eggNOG" id="COG0771">
    <property type="taxonomic scope" value="Bacteria"/>
</dbReference>
<dbReference type="HOGENOM" id="CLU_032540_0_1_0"/>
<dbReference type="OrthoDB" id="9809796at2"/>
<dbReference type="UniPathway" id="UPA00219"/>
<dbReference type="Proteomes" id="UP000002453">
    <property type="component" value="Chromosome"/>
</dbReference>
<dbReference type="GO" id="GO:0005737">
    <property type="term" value="C:cytoplasm"/>
    <property type="evidence" value="ECO:0007669"/>
    <property type="project" value="UniProtKB-SubCell"/>
</dbReference>
<dbReference type="GO" id="GO:0005524">
    <property type="term" value="F:ATP binding"/>
    <property type="evidence" value="ECO:0007669"/>
    <property type="project" value="UniProtKB-UniRule"/>
</dbReference>
<dbReference type="GO" id="GO:0008764">
    <property type="term" value="F:UDP-N-acetylmuramoylalanine-D-glutamate ligase activity"/>
    <property type="evidence" value="ECO:0007669"/>
    <property type="project" value="UniProtKB-UniRule"/>
</dbReference>
<dbReference type="GO" id="GO:0051301">
    <property type="term" value="P:cell division"/>
    <property type="evidence" value="ECO:0007669"/>
    <property type="project" value="UniProtKB-KW"/>
</dbReference>
<dbReference type="GO" id="GO:0071555">
    <property type="term" value="P:cell wall organization"/>
    <property type="evidence" value="ECO:0007669"/>
    <property type="project" value="UniProtKB-KW"/>
</dbReference>
<dbReference type="GO" id="GO:0009252">
    <property type="term" value="P:peptidoglycan biosynthetic process"/>
    <property type="evidence" value="ECO:0007669"/>
    <property type="project" value="UniProtKB-UniRule"/>
</dbReference>
<dbReference type="GO" id="GO:0008360">
    <property type="term" value="P:regulation of cell shape"/>
    <property type="evidence" value="ECO:0007669"/>
    <property type="project" value="UniProtKB-KW"/>
</dbReference>
<dbReference type="Gene3D" id="3.90.190.20">
    <property type="entry name" value="Mur ligase, C-terminal domain"/>
    <property type="match status" value="1"/>
</dbReference>
<dbReference type="Gene3D" id="3.40.1190.10">
    <property type="entry name" value="Mur-like, catalytic domain"/>
    <property type="match status" value="1"/>
</dbReference>
<dbReference type="Gene3D" id="3.40.50.720">
    <property type="entry name" value="NAD(P)-binding Rossmann-like Domain"/>
    <property type="match status" value="1"/>
</dbReference>
<dbReference type="HAMAP" id="MF_00639">
    <property type="entry name" value="MurD"/>
    <property type="match status" value="1"/>
</dbReference>
<dbReference type="InterPro" id="IPR036565">
    <property type="entry name" value="Mur-like_cat_sf"/>
</dbReference>
<dbReference type="InterPro" id="IPR004101">
    <property type="entry name" value="Mur_ligase_C"/>
</dbReference>
<dbReference type="InterPro" id="IPR036615">
    <property type="entry name" value="Mur_ligase_C_dom_sf"/>
</dbReference>
<dbReference type="InterPro" id="IPR013221">
    <property type="entry name" value="Mur_ligase_cen"/>
</dbReference>
<dbReference type="InterPro" id="IPR005762">
    <property type="entry name" value="MurD"/>
</dbReference>
<dbReference type="NCBIfam" id="TIGR01087">
    <property type="entry name" value="murD"/>
    <property type="match status" value="1"/>
</dbReference>
<dbReference type="PANTHER" id="PTHR43692">
    <property type="entry name" value="UDP-N-ACETYLMURAMOYLALANINE--D-GLUTAMATE LIGASE"/>
    <property type="match status" value="1"/>
</dbReference>
<dbReference type="PANTHER" id="PTHR43692:SF1">
    <property type="entry name" value="UDP-N-ACETYLMURAMOYLALANINE--D-GLUTAMATE LIGASE"/>
    <property type="match status" value="1"/>
</dbReference>
<dbReference type="Pfam" id="PF02875">
    <property type="entry name" value="Mur_ligase_C"/>
    <property type="match status" value="1"/>
</dbReference>
<dbReference type="Pfam" id="PF08245">
    <property type="entry name" value="Mur_ligase_M"/>
    <property type="match status" value="1"/>
</dbReference>
<dbReference type="Pfam" id="PF21799">
    <property type="entry name" value="MurD-like_N"/>
    <property type="match status" value="1"/>
</dbReference>
<dbReference type="Pfam" id="PF21377">
    <property type="entry name" value="MurD_N"/>
    <property type="match status" value="1"/>
</dbReference>
<dbReference type="SUPFAM" id="SSF51984">
    <property type="entry name" value="MurCD N-terminal domain"/>
    <property type="match status" value="1"/>
</dbReference>
<dbReference type="SUPFAM" id="SSF53623">
    <property type="entry name" value="MurD-like peptide ligases, catalytic domain"/>
    <property type="match status" value="1"/>
</dbReference>
<dbReference type="SUPFAM" id="SSF53244">
    <property type="entry name" value="MurD-like peptide ligases, peptide-binding domain"/>
    <property type="match status" value="1"/>
</dbReference>
<comment type="function">
    <text evidence="1">Cell wall formation. Catalyzes the addition of glutamate to the nucleotide precursor UDP-N-acetylmuramoyl-L-alanine (UMA).</text>
</comment>
<comment type="catalytic activity">
    <reaction evidence="1">
        <text>UDP-N-acetyl-alpha-D-muramoyl-L-alanine + D-glutamate + ATP = UDP-N-acetyl-alpha-D-muramoyl-L-alanyl-D-glutamate + ADP + phosphate + H(+)</text>
        <dbReference type="Rhea" id="RHEA:16429"/>
        <dbReference type="ChEBI" id="CHEBI:15378"/>
        <dbReference type="ChEBI" id="CHEBI:29986"/>
        <dbReference type="ChEBI" id="CHEBI:30616"/>
        <dbReference type="ChEBI" id="CHEBI:43474"/>
        <dbReference type="ChEBI" id="CHEBI:83898"/>
        <dbReference type="ChEBI" id="CHEBI:83900"/>
        <dbReference type="ChEBI" id="CHEBI:456216"/>
        <dbReference type="EC" id="6.3.2.9"/>
    </reaction>
</comment>
<comment type="pathway">
    <text evidence="1">Cell wall biogenesis; peptidoglycan biosynthesis.</text>
</comment>
<comment type="subcellular location">
    <subcellularLocation>
        <location evidence="1">Cytoplasm</location>
    </subcellularLocation>
</comment>
<comment type="similarity">
    <text evidence="1">Belongs to the MurCDEF family.</text>
</comment>
<keyword id="KW-0067">ATP-binding</keyword>
<keyword id="KW-0131">Cell cycle</keyword>
<keyword id="KW-0132">Cell division</keyword>
<keyword id="KW-0133">Cell shape</keyword>
<keyword id="KW-0961">Cell wall biogenesis/degradation</keyword>
<keyword id="KW-0963">Cytoplasm</keyword>
<keyword id="KW-0436">Ligase</keyword>
<keyword id="KW-0547">Nucleotide-binding</keyword>
<keyword id="KW-0573">Peptidoglycan synthesis</keyword>
<keyword id="KW-1185">Reference proteome</keyword>
<feature type="chain" id="PRO_1000130878" description="UDP-N-acetylmuramoylalanine--D-glutamate ligase">
    <location>
        <begin position="1"/>
        <end position="423"/>
    </location>
</feature>
<feature type="binding site" evidence="1">
    <location>
        <begin position="112"/>
        <end position="118"/>
    </location>
    <ligand>
        <name>ATP</name>
        <dbReference type="ChEBI" id="CHEBI:30616"/>
    </ligand>
</feature>
<accession>B7IFU5</accession>
<evidence type="ECO:0000255" key="1">
    <source>
        <dbReference type="HAMAP-Rule" id="MF_00639"/>
    </source>
</evidence>
<organism>
    <name type="scientific">Thermosipho africanus (strain TCF52B)</name>
    <dbReference type="NCBI Taxonomy" id="484019"/>
    <lineage>
        <taxon>Bacteria</taxon>
        <taxon>Thermotogati</taxon>
        <taxon>Thermotogota</taxon>
        <taxon>Thermotogae</taxon>
        <taxon>Thermotogales</taxon>
        <taxon>Fervidobacteriaceae</taxon>
        <taxon>Thermosipho</taxon>
    </lineage>
</organism>
<protein>
    <recommendedName>
        <fullName evidence="1">UDP-N-acetylmuramoylalanine--D-glutamate ligase</fullName>
        <ecNumber evidence="1">6.3.2.9</ecNumber>
    </recommendedName>
    <alternativeName>
        <fullName evidence="1">D-glutamic acid-adding enzyme</fullName>
    </alternativeName>
    <alternativeName>
        <fullName evidence="1">UDP-N-acetylmuramoyl-L-alanyl-D-glutamate synthetase</fullName>
    </alternativeName>
</protein>
<proteinExistence type="inferred from homology"/>